<proteinExistence type="inferred from homology"/>
<keyword id="KW-0413">Isomerase</keyword>
<keyword id="KW-0423">Lactose metabolism</keyword>
<sequence length="171" mass="18951">MKIALGCDHIVTDTKMRVSEFLKSKGHEVIDVGTYDFTRTHYPIFGKKVGEQVVSGNADLGVCICGTGVGINNAVNKVPGVRSALVRDMTSALYAKEELNANVIGFGGRIIGELLMCDIIDAFINAEYKPTEENKKLIAKIKHLETSNADQADPHFFDEFLEKWDRGEYHD</sequence>
<accession>A6QJ38</accession>
<evidence type="ECO:0000255" key="1">
    <source>
        <dbReference type="HAMAP-Rule" id="MF_01556"/>
    </source>
</evidence>
<reference key="1">
    <citation type="journal article" date="2008" name="J. Bacteriol.">
        <title>Genome sequence of Staphylococcus aureus strain Newman and comparative analysis of staphylococcal genomes: polymorphism and evolution of two major pathogenicity islands.</title>
        <authorList>
            <person name="Baba T."/>
            <person name="Bae T."/>
            <person name="Schneewind O."/>
            <person name="Takeuchi F."/>
            <person name="Hiramatsu K."/>
        </authorList>
    </citation>
    <scope>NUCLEOTIDE SEQUENCE [LARGE SCALE GENOMIC DNA]</scope>
    <source>
        <strain>Newman</strain>
    </source>
</reference>
<comment type="catalytic activity">
    <reaction evidence="1">
        <text>aldehydo-D-galactose 6-phosphate = keto-D-tagatose 6-phosphate</text>
        <dbReference type="Rhea" id="RHEA:13033"/>
        <dbReference type="ChEBI" id="CHEBI:58255"/>
        <dbReference type="ChEBI" id="CHEBI:134283"/>
        <dbReference type="EC" id="5.3.1.26"/>
    </reaction>
</comment>
<comment type="pathway">
    <text evidence="1">Carbohydrate metabolism; D-galactose 6-phosphate degradation; D-tagatose 6-phosphate from D-galactose 6-phosphate: step 1/1.</text>
</comment>
<comment type="subunit">
    <text evidence="1">Heteromultimeric protein consisting of LacA and LacB.</text>
</comment>
<comment type="similarity">
    <text evidence="1">Belongs to the LacAB/RpiB family.</text>
</comment>
<protein>
    <recommendedName>
        <fullName evidence="1">Galactose-6-phosphate isomerase subunit LacB</fullName>
        <ecNumber evidence="1">5.3.1.26</ecNumber>
    </recommendedName>
</protein>
<feature type="chain" id="PRO_1000073579" description="Galactose-6-phosphate isomerase subunit LacB">
    <location>
        <begin position="1"/>
        <end position="171"/>
    </location>
</feature>
<dbReference type="EC" id="5.3.1.26" evidence="1"/>
<dbReference type="EMBL" id="AP009351">
    <property type="protein sequence ID" value="BAF68370.1"/>
    <property type="molecule type" value="Genomic_DNA"/>
</dbReference>
<dbReference type="RefSeq" id="WP_000684746.1">
    <property type="nucleotide sequence ID" value="NZ_JBBIAE010000006.1"/>
</dbReference>
<dbReference type="SMR" id="A6QJ38"/>
<dbReference type="KEGG" id="sae:NWMN_2098"/>
<dbReference type="HOGENOM" id="CLU_091396_2_0_9"/>
<dbReference type="UniPathway" id="UPA00702">
    <property type="reaction ID" value="UER00714"/>
</dbReference>
<dbReference type="Proteomes" id="UP000006386">
    <property type="component" value="Chromosome"/>
</dbReference>
<dbReference type="GO" id="GO:0050044">
    <property type="term" value="F:galactose-6-phosphate isomerase activity"/>
    <property type="evidence" value="ECO:0007669"/>
    <property type="project" value="UniProtKB-UniRule"/>
</dbReference>
<dbReference type="GO" id="GO:0004751">
    <property type="term" value="F:ribose-5-phosphate isomerase activity"/>
    <property type="evidence" value="ECO:0007669"/>
    <property type="project" value="TreeGrafter"/>
</dbReference>
<dbReference type="GO" id="GO:0019316">
    <property type="term" value="P:D-allose catabolic process"/>
    <property type="evidence" value="ECO:0007669"/>
    <property type="project" value="TreeGrafter"/>
</dbReference>
<dbReference type="GO" id="GO:0019388">
    <property type="term" value="P:galactose catabolic process"/>
    <property type="evidence" value="ECO:0007669"/>
    <property type="project" value="UniProtKB-UniPathway"/>
</dbReference>
<dbReference type="GO" id="GO:0019512">
    <property type="term" value="P:lactose catabolic process via tagatose-6-phosphate"/>
    <property type="evidence" value="ECO:0007669"/>
    <property type="project" value="UniProtKB-UniRule"/>
</dbReference>
<dbReference type="GO" id="GO:0009052">
    <property type="term" value="P:pentose-phosphate shunt, non-oxidative branch"/>
    <property type="evidence" value="ECO:0007669"/>
    <property type="project" value="TreeGrafter"/>
</dbReference>
<dbReference type="Gene3D" id="3.40.1400.10">
    <property type="entry name" value="Sugar-phosphate isomerase, RpiB/LacA/LacB"/>
    <property type="match status" value="1"/>
</dbReference>
<dbReference type="HAMAP" id="MF_01556">
    <property type="entry name" value="LacB"/>
    <property type="match status" value="1"/>
</dbReference>
<dbReference type="InterPro" id="IPR004784">
    <property type="entry name" value="LacB"/>
</dbReference>
<dbReference type="InterPro" id="IPR003500">
    <property type="entry name" value="RpiB_LacA_LacB"/>
</dbReference>
<dbReference type="InterPro" id="IPR036569">
    <property type="entry name" value="RpiB_LacA_LacB_sf"/>
</dbReference>
<dbReference type="NCBIfam" id="TIGR01119">
    <property type="entry name" value="lacB"/>
    <property type="match status" value="1"/>
</dbReference>
<dbReference type="NCBIfam" id="NF004051">
    <property type="entry name" value="PRK05571.1"/>
    <property type="match status" value="1"/>
</dbReference>
<dbReference type="NCBIfam" id="NF006381">
    <property type="entry name" value="PRK08622.1"/>
    <property type="match status" value="1"/>
</dbReference>
<dbReference type="NCBIfam" id="NF009258">
    <property type="entry name" value="PRK12615.1"/>
    <property type="match status" value="1"/>
</dbReference>
<dbReference type="NCBIfam" id="TIGR00689">
    <property type="entry name" value="rpiB_lacA_lacB"/>
    <property type="match status" value="1"/>
</dbReference>
<dbReference type="PANTHER" id="PTHR30345:SF0">
    <property type="entry name" value="DNA DAMAGE-REPAIR_TOLERATION PROTEIN DRT102"/>
    <property type="match status" value="1"/>
</dbReference>
<dbReference type="PANTHER" id="PTHR30345">
    <property type="entry name" value="RIBOSE-5-PHOSPHATE ISOMERASE B"/>
    <property type="match status" value="1"/>
</dbReference>
<dbReference type="Pfam" id="PF02502">
    <property type="entry name" value="LacAB_rpiB"/>
    <property type="match status" value="1"/>
</dbReference>
<dbReference type="PIRSF" id="PIRSF005384">
    <property type="entry name" value="RpiB_LacA_B"/>
    <property type="match status" value="1"/>
</dbReference>
<dbReference type="SUPFAM" id="SSF89623">
    <property type="entry name" value="Ribose/Galactose isomerase RpiB/AlsB"/>
    <property type="match status" value="1"/>
</dbReference>
<gene>
    <name evidence="1" type="primary">lacB</name>
    <name type="ordered locus">NWMN_2098</name>
</gene>
<organism>
    <name type="scientific">Staphylococcus aureus (strain Newman)</name>
    <dbReference type="NCBI Taxonomy" id="426430"/>
    <lineage>
        <taxon>Bacteria</taxon>
        <taxon>Bacillati</taxon>
        <taxon>Bacillota</taxon>
        <taxon>Bacilli</taxon>
        <taxon>Bacillales</taxon>
        <taxon>Staphylococcaceae</taxon>
        <taxon>Staphylococcus</taxon>
    </lineage>
</organism>
<name>LACB_STAAE</name>